<accession>B9DRF1</accession>
<protein>
    <recommendedName>
        <fullName evidence="1">Ribosome-recycling factor</fullName>
        <shortName evidence="1">RRF</shortName>
    </recommendedName>
    <alternativeName>
        <fullName evidence="1">Ribosome-releasing factor</fullName>
    </alternativeName>
</protein>
<evidence type="ECO:0000255" key="1">
    <source>
        <dbReference type="HAMAP-Rule" id="MF_00040"/>
    </source>
</evidence>
<organism>
    <name type="scientific">Streptococcus uberis (strain ATCC BAA-854 / 0140J)</name>
    <dbReference type="NCBI Taxonomy" id="218495"/>
    <lineage>
        <taxon>Bacteria</taxon>
        <taxon>Bacillati</taxon>
        <taxon>Bacillota</taxon>
        <taxon>Bacilli</taxon>
        <taxon>Lactobacillales</taxon>
        <taxon>Streptococcaceae</taxon>
        <taxon>Streptococcus</taxon>
    </lineage>
</organism>
<reference key="1">
    <citation type="journal article" date="2009" name="BMC Genomics">
        <title>Evidence for niche adaptation in the genome of the bovine pathogen Streptococcus uberis.</title>
        <authorList>
            <person name="Ward P.N."/>
            <person name="Holden M.T.G."/>
            <person name="Leigh J.A."/>
            <person name="Lennard N."/>
            <person name="Bignell A."/>
            <person name="Barron A."/>
            <person name="Clark L."/>
            <person name="Quail M.A."/>
            <person name="Woodward J."/>
            <person name="Barrell B.G."/>
            <person name="Egan S.A."/>
            <person name="Field T.R."/>
            <person name="Maskell D."/>
            <person name="Kehoe M."/>
            <person name="Dowson C.G."/>
            <person name="Chanter N."/>
            <person name="Whatmore A.M."/>
            <person name="Bentley S.D."/>
            <person name="Parkhill J."/>
        </authorList>
    </citation>
    <scope>NUCLEOTIDE SEQUENCE [LARGE SCALE GENOMIC DNA]</scope>
    <source>
        <strain>ATCC BAA-854 / 0140J</strain>
    </source>
</reference>
<sequence>MANAIIEKANQRFEQSFQSLSREYASIRAGRANASLLDRIQVEYYGVPTPLNQLASITVPEARVLLISPFDKSSIKDIERAINASDLGITPANDGSVIRLVIPALTEETRKELAKEVKKVGENQKIAIRNIRRDAMDEAKKQEKNKEITEDELKALEKDIQKATDQAIKHIDGMTSEKEKELLTV</sequence>
<comment type="function">
    <text evidence="1">Responsible for the release of ribosomes from messenger RNA at the termination of protein biosynthesis. May increase the efficiency of translation by recycling ribosomes from one round of translation to another.</text>
</comment>
<comment type="subcellular location">
    <subcellularLocation>
        <location evidence="1">Cytoplasm</location>
    </subcellularLocation>
</comment>
<comment type="similarity">
    <text evidence="1">Belongs to the RRF family.</text>
</comment>
<name>RRF_STRU0</name>
<proteinExistence type="inferred from homology"/>
<feature type="chain" id="PRO_1000194959" description="Ribosome-recycling factor">
    <location>
        <begin position="1"/>
        <end position="185"/>
    </location>
</feature>
<keyword id="KW-0963">Cytoplasm</keyword>
<keyword id="KW-0648">Protein biosynthesis</keyword>
<keyword id="KW-1185">Reference proteome</keyword>
<gene>
    <name evidence="1" type="primary">frr</name>
    <name type="ordered locus">SUB0484</name>
</gene>
<dbReference type="EMBL" id="AM946015">
    <property type="protein sequence ID" value="CAR41195.1"/>
    <property type="molecule type" value="Genomic_DNA"/>
</dbReference>
<dbReference type="RefSeq" id="WP_012658016.1">
    <property type="nucleotide sequence ID" value="NC_012004.1"/>
</dbReference>
<dbReference type="SMR" id="B9DRF1"/>
<dbReference type="STRING" id="218495.SUB0484"/>
<dbReference type="KEGG" id="sub:SUB0484"/>
<dbReference type="eggNOG" id="COG0233">
    <property type="taxonomic scope" value="Bacteria"/>
</dbReference>
<dbReference type="HOGENOM" id="CLU_073981_2_0_9"/>
<dbReference type="OrthoDB" id="9804006at2"/>
<dbReference type="Proteomes" id="UP000000449">
    <property type="component" value="Chromosome"/>
</dbReference>
<dbReference type="GO" id="GO:0005737">
    <property type="term" value="C:cytoplasm"/>
    <property type="evidence" value="ECO:0007669"/>
    <property type="project" value="UniProtKB-SubCell"/>
</dbReference>
<dbReference type="GO" id="GO:0043023">
    <property type="term" value="F:ribosomal large subunit binding"/>
    <property type="evidence" value="ECO:0007669"/>
    <property type="project" value="TreeGrafter"/>
</dbReference>
<dbReference type="GO" id="GO:0006415">
    <property type="term" value="P:translational termination"/>
    <property type="evidence" value="ECO:0007669"/>
    <property type="project" value="UniProtKB-UniRule"/>
</dbReference>
<dbReference type="CDD" id="cd00520">
    <property type="entry name" value="RRF"/>
    <property type="match status" value="1"/>
</dbReference>
<dbReference type="FunFam" id="1.10.132.20:FF:000001">
    <property type="entry name" value="Ribosome-recycling factor"/>
    <property type="match status" value="1"/>
</dbReference>
<dbReference type="FunFam" id="3.30.1360.40:FF:000001">
    <property type="entry name" value="Ribosome-recycling factor"/>
    <property type="match status" value="1"/>
</dbReference>
<dbReference type="Gene3D" id="3.30.1360.40">
    <property type="match status" value="1"/>
</dbReference>
<dbReference type="Gene3D" id="1.10.132.20">
    <property type="entry name" value="Ribosome-recycling factor"/>
    <property type="match status" value="1"/>
</dbReference>
<dbReference type="HAMAP" id="MF_00040">
    <property type="entry name" value="RRF"/>
    <property type="match status" value="1"/>
</dbReference>
<dbReference type="InterPro" id="IPR002661">
    <property type="entry name" value="Ribosome_recyc_fac"/>
</dbReference>
<dbReference type="InterPro" id="IPR023584">
    <property type="entry name" value="Ribosome_recyc_fac_dom"/>
</dbReference>
<dbReference type="InterPro" id="IPR036191">
    <property type="entry name" value="RRF_sf"/>
</dbReference>
<dbReference type="NCBIfam" id="TIGR00496">
    <property type="entry name" value="frr"/>
    <property type="match status" value="1"/>
</dbReference>
<dbReference type="PANTHER" id="PTHR20982:SF3">
    <property type="entry name" value="MITOCHONDRIAL RIBOSOME RECYCLING FACTOR PSEUDO 1"/>
    <property type="match status" value="1"/>
</dbReference>
<dbReference type="PANTHER" id="PTHR20982">
    <property type="entry name" value="RIBOSOME RECYCLING FACTOR"/>
    <property type="match status" value="1"/>
</dbReference>
<dbReference type="Pfam" id="PF01765">
    <property type="entry name" value="RRF"/>
    <property type="match status" value="1"/>
</dbReference>
<dbReference type="SUPFAM" id="SSF55194">
    <property type="entry name" value="Ribosome recycling factor, RRF"/>
    <property type="match status" value="1"/>
</dbReference>